<protein>
    <recommendedName>
        <fullName evidence="1">tRNA modification GTPase MnmE</fullName>
        <ecNumber evidence="1">3.6.-.-</ecNumber>
    </recommendedName>
</protein>
<gene>
    <name evidence="1" type="primary">mnmE</name>
    <name evidence="1" type="synonym">trmE</name>
    <name type="ordered locus">Abu_1620</name>
</gene>
<sequence>MFENDTIVAIATANGIGSISIVRVSGAKALEIATKISKKNNFKARLATLSTIYDSKNEIIDEALVIYFKSPFSFTGEDVVEFQCHGGVAISNMIVDEVLNAGARLANPGEFSKRAFFNNKIDLTKAEAISKIIEARSADAVKLLARQLKGELTNFVDEIREDLLFMLAYTEVSIDYAEEDLPTDIYEQIENKMQKISLKLSNTLEASRRREGMIEGFKVAIIGKPNVGKSSLLNKLLNFDRAIISDIAGTTRDTIEESVRIGTHIIKIVDTAGIRDASDVIEKIGIEKSIQAINEADIVIALFDNSKICDDEDKKILDLIKENSDKKVIVVLNKSDLQNQFDKNVLDSFIELSTKEDINPLIKELELILDSNTFGDDITLVSKRQVLAVENTLYNIGLAKEPLKSGELEFFAHFITQALEDISSITRPYDNDEMLDVMFGEFCLGK</sequence>
<comment type="function">
    <text evidence="1">Exhibits a very high intrinsic GTPase hydrolysis rate. Involved in the addition of a carboxymethylaminomethyl (cmnm) group at the wobble position (U34) of certain tRNAs, forming tRNA-cmnm(5)s(2)U34.</text>
</comment>
<comment type="cofactor">
    <cofactor evidence="1">
        <name>K(+)</name>
        <dbReference type="ChEBI" id="CHEBI:29103"/>
    </cofactor>
    <text evidence="1">Binds 1 potassium ion per subunit.</text>
</comment>
<comment type="subunit">
    <text evidence="1">Homodimer. Heterotetramer of two MnmE and two MnmG subunits.</text>
</comment>
<comment type="subcellular location">
    <subcellularLocation>
        <location evidence="1">Cytoplasm</location>
    </subcellularLocation>
</comment>
<comment type="similarity">
    <text evidence="1">Belongs to the TRAFAC class TrmE-Era-EngA-EngB-Septin-like GTPase superfamily. TrmE GTPase family.</text>
</comment>
<evidence type="ECO:0000255" key="1">
    <source>
        <dbReference type="HAMAP-Rule" id="MF_00379"/>
    </source>
</evidence>
<name>MNME_ALIB4</name>
<accession>A8EV95</accession>
<dbReference type="EC" id="3.6.-.-" evidence="1"/>
<dbReference type="EMBL" id="CP000361">
    <property type="protein sequence ID" value="ABV67868.1"/>
    <property type="molecule type" value="Genomic_DNA"/>
</dbReference>
<dbReference type="RefSeq" id="WP_012147603.1">
    <property type="nucleotide sequence ID" value="NC_009850.1"/>
</dbReference>
<dbReference type="SMR" id="A8EV95"/>
<dbReference type="STRING" id="367737.Abu_1620"/>
<dbReference type="GeneID" id="24304385"/>
<dbReference type="KEGG" id="abu:Abu_1620"/>
<dbReference type="eggNOG" id="COG0486">
    <property type="taxonomic scope" value="Bacteria"/>
</dbReference>
<dbReference type="HOGENOM" id="CLU_019624_4_1_7"/>
<dbReference type="Proteomes" id="UP000001136">
    <property type="component" value="Chromosome"/>
</dbReference>
<dbReference type="GO" id="GO:0005829">
    <property type="term" value="C:cytosol"/>
    <property type="evidence" value="ECO:0007669"/>
    <property type="project" value="TreeGrafter"/>
</dbReference>
<dbReference type="GO" id="GO:0005525">
    <property type="term" value="F:GTP binding"/>
    <property type="evidence" value="ECO:0007669"/>
    <property type="project" value="UniProtKB-UniRule"/>
</dbReference>
<dbReference type="GO" id="GO:0003924">
    <property type="term" value="F:GTPase activity"/>
    <property type="evidence" value="ECO:0007669"/>
    <property type="project" value="UniProtKB-UniRule"/>
</dbReference>
<dbReference type="GO" id="GO:0046872">
    <property type="term" value="F:metal ion binding"/>
    <property type="evidence" value="ECO:0007669"/>
    <property type="project" value="UniProtKB-KW"/>
</dbReference>
<dbReference type="GO" id="GO:0030488">
    <property type="term" value="P:tRNA methylation"/>
    <property type="evidence" value="ECO:0007669"/>
    <property type="project" value="TreeGrafter"/>
</dbReference>
<dbReference type="GO" id="GO:0002098">
    <property type="term" value="P:tRNA wobble uridine modification"/>
    <property type="evidence" value="ECO:0007669"/>
    <property type="project" value="TreeGrafter"/>
</dbReference>
<dbReference type="CDD" id="cd04164">
    <property type="entry name" value="trmE"/>
    <property type="match status" value="1"/>
</dbReference>
<dbReference type="CDD" id="cd14858">
    <property type="entry name" value="TrmE_N"/>
    <property type="match status" value="1"/>
</dbReference>
<dbReference type="FunFam" id="3.30.1360.120:FF:000003">
    <property type="entry name" value="tRNA modification GTPase MnmE"/>
    <property type="match status" value="1"/>
</dbReference>
<dbReference type="FunFam" id="3.40.50.300:FF:001376">
    <property type="entry name" value="tRNA modification GTPase MnmE"/>
    <property type="match status" value="1"/>
</dbReference>
<dbReference type="Gene3D" id="3.40.50.300">
    <property type="entry name" value="P-loop containing nucleotide triphosphate hydrolases"/>
    <property type="match status" value="1"/>
</dbReference>
<dbReference type="Gene3D" id="3.30.1360.120">
    <property type="entry name" value="Probable tRNA modification gtpase trme, domain 1"/>
    <property type="match status" value="1"/>
</dbReference>
<dbReference type="Gene3D" id="1.20.120.430">
    <property type="entry name" value="tRNA modification GTPase MnmE domain 2"/>
    <property type="match status" value="1"/>
</dbReference>
<dbReference type="HAMAP" id="MF_00379">
    <property type="entry name" value="GTPase_MnmE"/>
    <property type="match status" value="1"/>
</dbReference>
<dbReference type="InterPro" id="IPR031168">
    <property type="entry name" value="G_TrmE"/>
</dbReference>
<dbReference type="InterPro" id="IPR006073">
    <property type="entry name" value="GTP-bd"/>
</dbReference>
<dbReference type="InterPro" id="IPR018948">
    <property type="entry name" value="GTP-bd_TrmE_N"/>
</dbReference>
<dbReference type="InterPro" id="IPR004520">
    <property type="entry name" value="GTPase_MnmE"/>
</dbReference>
<dbReference type="InterPro" id="IPR027368">
    <property type="entry name" value="MnmE_dom2"/>
</dbReference>
<dbReference type="InterPro" id="IPR025867">
    <property type="entry name" value="MnmE_helical"/>
</dbReference>
<dbReference type="InterPro" id="IPR027417">
    <property type="entry name" value="P-loop_NTPase"/>
</dbReference>
<dbReference type="InterPro" id="IPR005225">
    <property type="entry name" value="Small_GTP-bd"/>
</dbReference>
<dbReference type="InterPro" id="IPR027266">
    <property type="entry name" value="TrmE/GcvT_dom1"/>
</dbReference>
<dbReference type="NCBIfam" id="TIGR00450">
    <property type="entry name" value="mnmE_trmE_thdF"/>
    <property type="match status" value="1"/>
</dbReference>
<dbReference type="NCBIfam" id="NF003661">
    <property type="entry name" value="PRK05291.1-3"/>
    <property type="match status" value="1"/>
</dbReference>
<dbReference type="NCBIfam" id="TIGR00231">
    <property type="entry name" value="small_GTP"/>
    <property type="match status" value="1"/>
</dbReference>
<dbReference type="PANTHER" id="PTHR42714">
    <property type="entry name" value="TRNA MODIFICATION GTPASE GTPBP3"/>
    <property type="match status" value="1"/>
</dbReference>
<dbReference type="PANTHER" id="PTHR42714:SF2">
    <property type="entry name" value="TRNA MODIFICATION GTPASE GTPBP3, MITOCHONDRIAL"/>
    <property type="match status" value="1"/>
</dbReference>
<dbReference type="Pfam" id="PF01926">
    <property type="entry name" value="MMR_HSR1"/>
    <property type="match status" value="1"/>
</dbReference>
<dbReference type="Pfam" id="PF12631">
    <property type="entry name" value="MnmE_helical"/>
    <property type="match status" value="1"/>
</dbReference>
<dbReference type="Pfam" id="PF10396">
    <property type="entry name" value="TrmE_N"/>
    <property type="match status" value="1"/>
</dbReference>
<dbReference type="PRINTS" id="PR00449">
    <property type="entry name" value="RASTRNSFRMNG"/>
</dbReference>
<dbReference type="SUPFAM" id="SSF52540">
    <property type="entry name" value="P-loop containing nucleoside triphosphate hydrolases"/>
    <property type="match status" value="1"/>
</dbReference>
<dbReference type="PROSITE" id="PS51709">
    <property type="entry name" value="G_TRME"/>
    <property type="match status" value="1"/>
</dbReference>
<reference key="1">
    <citation type="journal article" date="2007" name="PLoS ONE">
        <title>The complete genome sequence and analysis of the Epsilonproteobacterium Arcobacter butzleri.</title>
        <authorList>
            <person name="Miller W.G."/>
            <person name="Parker C.T."/>
            <person name="Rubenfield M."/>
            <person name="Mendz G.L."/>
            <person name="Woesten M.M.S.M."/>
            <person name="Ussery D.W."/>
            <person name="Stolz J.F."/>
            <person name="Binnewies T.T."/>
            <person name="Hallin P.F."/>
            <person name="Wang G."/>
            <person name="Malek J.A."/>
            <person name="Rogosin A."/>
            <person name="Stanker L.H."/>
            <person name="Mandrell R.E."/>
        </authorList>
    </citation>
    <scope>NUCLEOTIDE SEQUENCE [LARGE SCALE GENOMIC DNA]</scope>
    <source>
        <strain>RM4018</strain>
    </source>
</reference>
<organism>
    <name type="scientific">Aliarcobacter butzleri (strain RM4018)</name>
    <name type="common">Arcobacter butzleri</name>
    <dbReference type="NCBI Taxonomy" id="367737"/>
    <lineage>
        <taxon>Bacteria</taxon>
        <taxon>Pseudomonadati</taxon>
        <taxon>Campylobacterota</taxon>
        <taxon>Epsilonproteobacteria</taxon>
        <taxon>Campylobacterales</taxon>
        <taxon>Arcobacteraceae</taxon>
        <taxon>Aliarcobacter</taxon>
    </lineage>
</organism>
<proteinExistence type="inferred from homology"/>
<keyword id="KW-0963">Cytoplasm</keyword>
<keyword id="KW-0342">GTP-binding</keyword>
<keyword id="KW-0378">Hydrolase</keyword>
<keyword id="KW-0460">Magnesium</keyword>
<keyword id="KW-0479">Metal-binding</keyword>
<keyword id="KW-0547">Nucleotide-binding</keyword>
<keyword id="KW-0630">Potassium</keyword>
<keyword id="KW-1185">Reference proteome</keyword>
<keyword id="KW-0819">tRNA processing</keyword>
<feature type="chain" id="PRO_0000345707" description="tRNA modification GTPase MnmE">
    <location>
        <begin position="1"/>
        <end position="446"/>
    </location>
</feature>
<feature type="domain" description="TrmE-type G">
    <location>
        <begin position="216"/>
        <end position="370"/>
    </location>
</feature>
<feature type="binding site" evidence="1">
    <location>
        <position position="23"/>
    </location>
    <ligand>
        <name>(6S)-5-formyl-5,6,7,8-tetrahydrofolate</name>
        <dbReference type="ChEBI" id="CHEBI:57457"/>
    </ligand>
</feature>
<feature type="binding site" evidence="1">
    <location>
        <position position="81"/>
    </location>
    <ligand>
        <name>(6S)-5-formyl-5,6,7,8-tetrahydrofolate</name>
        <dbReference type="ChEBI" id="CHEBI:57457"/>
    </ligand>
</feature>
<feature type="binding site" evidence="1">
    <location>
        <position position="120"/>
    </location>
    <ligand>
        <name>(6S)-5-formyl-5,6,7,8-tetrahydrofolate</name>
        <dbReference type="ChEBI" id="CHEBI:57457"/>
    </ligand>
</feature>
<feature type="binding site" evidence="1">
    <location>
        <begin position="226"/>
        <end position="231"/>
    </location>
    <ligand>
        <name>GTP</name>
        <dbReference type="ChEBI" id="CHEBI:37565"/>
    </ligand>
</feature>
<feature type="binding site" evidence="1">
    <location>
        <position position="226"/>
    </location>
    <ligand>
        <name>K(+)</name>
        <dbReference type="ChEBI" id="CHEBI:29103"/>
    </ligand>
</feature>
<feature type="binding site" evidence="1">
    <location>
        <position position="230"/>
    </location>
    <ligand>
        <name>Mg(2+)</name>
        <dbReference type="ChEBI" id="CHEBI:18420"/>
    </ligand>
</feature>
<feature type="binding site" evidence="1">
    <location>
        <begin position="245"/>
        <end position="251"/>
    </location>
    <ligand>
        <name>GTP</name>
        <dbReference type="ChEBI" id="CHEBI:37565"/>
    </ligand>
</feature>
<feature type="binding site" evidence="1">
    <location>
        <position position="245"/>
    </location>
    <ligand>
        <name>K(+)</name>
        <dbReference type="ChEBI" id="CHEBI:29103"/>
    </ligand>
</feature>
<feature type="binding site" evidence="1">
    <location>
        <position position="247"/>
    </location>
    <ligand>
        <name>K(+)</name>
        <dbReference type="ChEBI" id="CHEBI:29103"/>
    </ligand>
</feature>
<feature type="binding site" evidence="1">
    <location>
        <position position="250"/>
    </location>
    <ligand>
        <name>K(+)</name>
        <dbReference type="ChEBI" id="CHEBI:29103"/>
    </ligand>
</feature>
<feature type="binding site" evidence="1">
    <location>
        <position position="251"/>
    </location>
    <ligand>
        <name>Mg(2+)</name>
        <dbReference type="ChEBI" id="CHEBI:18420"/>
    </ligand>
</feature>
<feature type="binding site" evidence="1">
    <location>
        <begin position="270"/>
        <end position="273"/>
    </location>
    <ligand>
        <name>GTP</name>
        <dbReference type="ChEBI" id="CHEBI:37565"/>
    </ligand>
</feature>
<feature type="binding site" evidence="1">
    <location>
        <position position="446"/>
    </location>
    <ligand>
        <name>(6S)-5-formyl-5,6,7,8-tetrahydrofolate</name>
        <dbReference type="ChEBI" id="CHEBI:57457"/>
    </ligand>
</feature>